<name>YAAI_SALG2</name>
<gene>
    <name evidence="1" type="primary">yaaI</name>
    <name type="ordered locus">SG0011</name>
</gene>
<dbReference type="EMBL" id="AM933173">
    <property type="protein sequence ID" value="CAR35921.1"/>
    <property type="molecule type" value="Genomic_DNA"/>
</dbReference>
<dbReference type="RefSeq" id="WP_001258084.1">
    <property type="nucleotide sequence ID" value="NC_011274.1"/>
</dbReference>
<dbReference type="KEGG" id="seg:SG0011"/>
<dbReference type="HOGENOM" id="CLU_158661_0_0_6"/>
<dbReference type="Proteomes" id="UP000008321">
    <property type="component" value="Chromosome"/>
</dbReference>
<dbReference type="HAMAP" id="MF_01372">
    <property type="entry name" value="UPF0412"/>
    <property type="match status" value="1"/>
</dbReference>
<dbReference type="InterPro" id="IPR020240">
    <property type="entry name" value="UPF0412_YaaI"/>
</dbReference>
<dbReference type="NCBIfam" id="NF007541">
    <property type="entry name" value="PRK10154.1"/>
    <property type="match status" value="1"/>
</dbReference>
<dbReference type="Pfam" id="PF10807">
    <property type="entry name" value="DUF2541"/>
    <property type="match status" value="1"/>
</dbReference>
<proteinExistence type="inferred from homology"/>
<reference key="1">
    <citation type="journal article" date="2008" name="Genome Res.">
        <title>Comparative genome analysis of Salmonella enteritidis PT4 and Salmonella gallinarum 287/91 provides insights into evolutionary and host adaptation pathways.</title>
        <authorList>
            <person name="Thomson N.R."/>
            <person name="Clayton D.J."/>
            <person name="Windhorst D."/>
            <person name="Vernikos G."/>
            <person name="Davidson S."/>
            <person name="Churcher C."/>
            <person name="Quail M.A."/>
            <person name="Stevens M."/>
            <person name="Jones M.A."/>
            <person name="Watson M."/>
            <person name="Barron A."/>
            <person name="Layton A."/>
            <person name="Pickard D."/>
            <person name="Kingsley R.A."/>
            <person name="Bignell A."/>
            <person name="Clark L."/>
            <person name="Harris B."/>
            <person name="Ormond D."/>
            <person name="Abdellah Z."/>
            <person name="Brooks K."/>
            <person name="Cherevach I."/>
            <person name="Chillingworth T."/>
            <person name="Woodward J."/>
            <person name="Norberczak H."/>
            <person name="Lord A."/>
            <person name="Arrowsmith C."/>
            <person name="Jagels K."/>
            <person name="Moule S."/>
            <person name="Mungall K."/>
            <person name="Saunders M."/>
            <person name="Whitehead S."/>
            <person name="Chabalgoity J.A."/>
            <person name="Maskell D."/>
            <person name="Humphreys T."/>
            <person name="Roberts M."/>
            <person name="Barrow P.A."/>
            <person name="Dougan G."/>
            <person name="Parkhill J."/>
        </authorList>
    </citation>
    <scope>NUCLEOTIDE SEQUENCE [LARGE SCALE GENOMIC DNA]</scope>
    <source>
        <strain>287/91 / NCTC 13346</strain>
    </source>
</reference>
<keyword id="KW-0732">Signal</keyword>
<feature type="signal peptide" evidence="1">
    <location>
        <begin position="1"/>
        <end position="23"/>
    </location>
</feature>
<feature type="chain" id="PRO_5000398522" description="UPF0412 protein YaaI">
    <location>
        <begin position="24"/>
        <end position="134"/>
    </location>
</feature>
<evidence type="ECO:0000255" key="1">
    <source>
        <dbReference type="HAMAP-Rule" id="MF_01372"/>
    </source>
</evidence>
<protein>
    <recommendedName>
        <fullName evidence="1">UPF0412 protein YaaI</fullName>
    </recommendedName>
</protein>
<comment type="similarity">
    <text evidence="1">Belongs to the UPF0412 family.</text>
</comment>
<accession>B5RF07</accession>
<sequence length="134" mass="14406">MRSVLTISAGLLFGLALSSVAHANDHKILGVIAMPRNETNDLALKIPVCRIVKRIQLTADHGDIELSGASVYFKTARSASQSLNVPSSIKEGQTTGWININSDNDNKRCVSKITFSGHTVNSSDMARLKVIGDD</sequence>
<organism>
    <name type="scientific">Salmonella gallinarum (strain 287/91 / NCTC 13346)</name>
    <dbReference type="NCBI Taxonomy" id="550538"/>
    <lineage>
        <taxon>Bacteria</taxon>
        <taxon>Pseudomonadati</taxon>
        <taxon>Pseudomonadota</taxon>
        <taxon>Gammaproteobacteria</taxon>
        <taxon>Enterobacterales</taxon>
        <taxon>Enterobacteriaceae</taxon>
        <taxon>Salmonella</taxon>
    </lineage>
</organism>